<feature type="chain" id="PRO_0000357887" description="NADH-quinone oxidoreductase subunit D">
    <location>
        <begin position="1"/>
        <end position="411"/>
    </location>
</feature>
<organism>
    <name type="scientific">Phenylobacterium zucineum (strain HLK1)</name>
    <dbReference type="NCBI Taxonomy" id="450851"/>
    <lineage>
        <taxon>Bacteria</taxon>
        <taxon>Pseudomonadati</taxon>
        <taxon>Pseudomonadota</taxon>
        <taxon>Alphaproteobacteria</taxon>
        <taxon>Caulobacterales</taxon>
        <taxon>Caulobacteraceae</taxon>
        <taxon>Phenylobacterium</taxon>
    </lineage>
</organism>
<reference key="1">
    <citation type="journal article" date="2008" name="BMC Genomics">
        <title>Complete genome of Phenylobacterium zucineum - a novel facultative intracellular bacterium isolated from human erythroleukemia cell line K562.</title>
        <authorList>
            <person name="Luo Y."/>
            <person name="Xu X."/>
            <person name="Ding Z."/>
            <person name="Liu Z."/>
            <person name="Zhang B."/>
            <person name="Yan Z."/>
            <person name="Sun J."/>
            <person name="Hu S."/>
            <person name="Hu X."/>
        </authorList>
    </citation>
    <scope>NUCLEOTIDE SEQUENCE [LARGE SCALE GENOMIC DNA]</scope>
    <source>
        <strain>HLK1</strain>
    </source>
</reference>
<keyword id="KW-0997">Cell inner membrane</keyword>
<keyword id="KW-1003">Cell membrane</keyword>
<keyword id="KW-0472">Membrane</keyword>
<keyword id="KW-0520">NAD</keyword>
<keyword id="KW-0874">Quinone</keyword>
<keyword id="KW-1185">Reference proteome</keyword>
<keyword id="KW-1278">Translocase</keyword>
<keyword id="KW-0813">Transport</keyword>
<keyword id="KW-0830">Ubiquinone</keyword>
<name>NUOD_PHEZH</name>
<dbReference type="EC" id="7.1.1.-" evidence="1"/>
<dbReference type="EMBL" id="CP000747">
    <property type="protein sequence ID" value="ACG78213.1"/>
    <property type="molecule type" value="Genomic_DNA"/>
</dbReference>
<dbReference type="RefSeq" id="WP_012522355.1">
    <property type="nucleotide sequence ID" value="NC_011144.1"/>
</dbReference>
<dbReference type="SMR" id="B4RCM6"/>
<dbReference type="STRING" id="450851.PHZ_c1802"/>
<dbReference type="KEGG" id="pzu:PHZ_c1802"/>
<dbReference type="eggNOG" id="COG0649">
    <property type="taxonomic scope" value="Bacteria"/>
</dbReference>
<dbReference type="HOGENOM" id="CLU_015134_1_1_5"/>
<dbReference type="Proteomes" id="UP000001868">
    <property type="component" value="Chromosome"/>
</dbReference>
<dbReference type="GO" id="GO:0005886">
    <property type="term" value="C:plasma membrane"/>
    <property type="evidence" value="ECO:0007669"/>
    <property type="project" value="UniProtKB-SubCell"/>
</dbReference>
<dbReference type="GO" id="GO:0051287">
    <property type="term" value="F:NAD binding"/>
    <property type="evidence" value="ECO:0007669"/>
    <property type="project" value="InterPro"/>
</dbReference>
<dbReference type="GO" id="GO:0050136">
    <property type="term" value="F:NADH:ubiquinone reductase (non-electrogenic) activity"/>
    <property type="evidence" value="ECO:0007669"/>
    <property type="project" value="UniProtKB-UniRule"/>
</dbReference>
<dbReference type="GO" id="GO:0048038">
    <property type="term" value="F:quinone binding"/>
    <property type="evidence" value="ECO:0007669"/>
    <property type="project" value="UniProtKB-KW"/>
</dbReference>
<dbReference type="FunFam" id="1.10.645.10:FF:000005">
    <property type="entry name" value="NADH-quinone oxidoreductase subunit D"/>
    <property type="match status" value="1"/>
</dbReference>
<dbReference type="Gene3D" id="1.10.645.10">
    <property type="entry name" value="Cytochrome-c3 Hydrogenase, chain B"/>
    <property type="match status" value="1"/>
</dbReference>
<dbReference type="HAMAP" id="MF_01358">
    <property type="entry name" value="NDH1_NuoD"/>
    <property type="match status" value="1"/>
</dbReference>
<dbReference type="InterPro" id="IPR001135">
    <property type="entry name" value="NADH_Q_OxRdtase_suD"/>
</dbReference>
<dbReference type="InterPro" id="IPR014029">
    <property type="entry name" value="NADH_UbQ_OxRdtase_49kDa_CS"/>
</dbReference>
<dbReference type="InterPro" id="IPR022885">
    <property type="entry name" value="NDH1_su_D/H"/>
</dbReference>
<dbReference type="InterPro" id="IPR029014">
    <property type="entry name" value="NiFe-Hase_large"/>
</dbReference>
<dbReference type="NCBIfam" id="TIGR01962">
    <property type="entry name" value="NuoD"/>
    <property type="match status" value="1"/>
</dbReference>
<dbReference type="NCBIfam" id="NF004739">
    <property type="entry name" value="PRK06075.1"/>
    <property type="match status" value="1"/>
</dbReference>
<dbReference type="PANTHER" id="PTHR11993:SF10">
    <property type="entry name" value="NADH DEHYDROGENASE [UBIQUINONE] IRON-SULFUR PROTEIN 2, MITOCHONDRIAL"/>
    <property type="match status" value="1"/>
</dbReference>
<dbReference type="PANTHER" id="PTHR11993">
    <property type="entry name" value="NADH-UBIQUINONE OXIDOREDUCTASE 49 KDA SUBUNIT"/>
    <property type="match status" value="1"/>
</dbReference>
<dbReference type="Pfam" id="PF00346">
    <property type="entry name" value="Complex1_49kDa"/>
    <property type="match status" value="1"/>
</dbReference>
<dbReference type="SUPFAM" id="SSF56762">
    <property type="entry name" value="HydB/Nqo4-like"/>
    <property type="match status" value="1"/>
</dbReference>
<dbReference type="PROSITE" id="PS00535">
    <property type="entry name" value="COMPLEX1_49K"/>
    <property type="match status" value="1"/>
</dbReference>
<accession>B4RCM6</accession>
<evidence type="ECO:0000255" key="1">
    <source>
        <dbReference type="HAMAP-Rule" id="MF_01358"/>
    </source>
</evidence>
<comment type="function">
    <text evidence="1">NDH-1 shuttles electrons from NADH, via FMN and iron-sulfur (Fe-S) centers, to quinones in the respiratory chain. The immediate electron acceptor for the enzyme in this species is believed to be ubiquinone. Couples the redox reaction to proton translocation (for every two electrons transferred, four hydrogen ions are translocated across the cytoplasmic membrane), and thus conserves the redox energy in a proton gradient.</text>
</comment>
<comment type="catalytic activity">
    <reaction evidence="1">
        <text>a quinone + NADH + 5 H(+)(in) = a quinol + NAD(+) + 4 H(+)(out)</text>
        <dbReference type="Rhea" id="RHEA:57888"/>
        <dbReference type="ChEBI" id="CHEBI:15378"/>
        <dbReference type="ChEBI" id="CHEBI:24646"/>
        <dbReference type="ChEBI" id="CHEBI:57540"/>
        <dbReference type="ChEBI" id="CHEBI:57945"/>
        <dbReference type="ChEBI" id="CHEBI:132124"/>
    </reaction>
</comment>
<comment type="subunit">
    <text evidence="1">NDH-1 is composed of 14 different subunits. Subunits NuoB, C, D, E, F, and G constitute the peripheral sector of the complex.</text>
</comment>
<comment type="subcellular location">
    <subcellularLocation>
        <location evidence="1">Cell inner membrane</location>
        <topology evidence="1">Peripheral membrane protein</topology>
        <orientation evidence="1">Cytoplasmic side</orientation>
    </subcellularLocation>
</comment>
<comment type="similarity">
    <text evidence="1">Belongs to the complex I 49 kDa subunit family.</text>
</comment>
<sequence length="411" mass="46545">MTGQTAPAAPEDANVLGLPETKVRKFNINFGPQHPAAHGVLRLVLELDGEVVERVDPHIGLLHRGTEKLMEARPYAQTIPYFDRLDYVAPMNQEHAYCLAIEKLLGVEVPVRGLLIRTLYDEIGRILNHLLNVTTQAMDVGALTPPLWGFEEREKLMIFYERASGARLHANYYRVGGVRQDLPPELVQDISDWCDAFPKILDDIEGLITDNRIFKQRNVDIGVVTKEEAIAWGFSGVMVRGSGIPWDLRRSQPYALYSEMEFDIPLGVNGDCYDRYLCRMQEMRESTKIMKQCCERLLKTSGPVLVDDHKVSPPRRGEMKRSMEALIHHFKLYTEGYRTPPGDVYACVEAPKGEFGVYLVSNGTNKPYRCKIRAPGYPHLQAMDWMNRGHMLADVSAILGSLDIVFGEIDR</sequence>
<protein>
    <recommendedName>
        <fullName evidence="1">NADH-quinone oxidoreductase subunit D</fullName>
        <ecNumber evidence="1">7.1.1.-</ecNumber>
    </recommendedName>
    <alternativeName>
        <fullName evidence="1">NADH dehydrogenase I subunit D</fullName>
    </alternativeName>
    <alternativeName>
        <fullName evidence="1">NDH-1 subunit D</fullName>
    </alternativeName>
</protein>
<gene>
    <name evidence="1" type="primary">nuoD</name>
    <name type="ordered locus">PHZ_c1802</name>
</gene>
<proteinExistence type="inferred from homology"/>